<reference key="1">
    <citation type="journal article" date="2006" name="Proc. Natl. Acad. Sci. U.S.A.">
        <title>Comparative genomics of the lactic acid bacteria.</title>
        <authorList>
            <person name="Makarova K.S."/>
            <person name="Slesarev A."/>
            <person name="Wolf Y.I."/>
            <person name="Sorokin A."/>
            <person name="Mirkin B."/>
            <person name="Koonin E.V."/>
            <person name="Pavlov A."/>
            <person name="Pavlova N."/>
            <person name="Karamychev V."/>
            <person name="Polouchine N."/>
            <person name="Shakhova V."/>
            <person name="Grigoriev I."/>
            <person name="Lou Y."/>
            <person name="Rohksar D."/>
            <person name="Lucas S."/>
            <person name="Huang K."/>
            <person name="Goodstein D.M."/>
            <person name="Hawkins T."/>
            <person name="Plengvidhya V."/>
            <person name="Welker D."/>
            <person name="Hughes J."/>
            <person name="Goh Y."/>
            <person name="Benson A."/>
            <person name="Baldwin K."/>
            <person name="Lee J.-H."/>
            <person name="Diaz-Muniz I."/>
            <person name="Dosti B."/>
            <person name="Smeianov V."/>
            <person name="Wechter W."/>
            <person name="Barabote R."/>
            <person name="Lorca G."/>
            <person name="Altermann E."/>
            <person name="Barrangou R."/>
            <person name="Ganesan B."/>
            <person name="Xie Y."/>
            <person name="Rawsthorne H."/>
            <person name="Tamir D."/>
            <person name="Parker C."/>
            <person name="Breidt F."/>
            <person name="Broadbent J.R."/>
            <person name="Hutkins R."/>
            <person name="O'Sullivan D."/>
            <person name="Steele J."/>
            <person name="Unlu G."/>
            <person name="Saier M.H. Jr."/>
            <person name="Klaenhammer T."/>
            <person name="Richardson P."/>
            <person name="Kozyavkin S."/>
            <person name="Weimer B.C."/>
            <person name="Mills D.A."/>
        </authorList>
    </citation>
    <scope>NUCLEOTIDE SEQUENCE [LARGE SCALE GENOMIC DNA]</scope>
    <source>
        <strain>ATCC 33323 / DSM 20243 / BCRC 14619 / CIP 102991 / JCM 1131 / KCTC 3163 / NCIMB 11718 / NCTC 13722 / AM63</strain>
    </source>
</reference>
<feature type="chain" id="PRO_1000020086" description="Methionyl-tRNA formyltransferase">
    <location>
        <begin position="1"/>
        <end position="314"/>
    </location>
</feature>
<feature type="binding site" evidence="1">
    <location>
        <begin position="110"/>
        <end position="113"/>
    </location>
    <ligand>
        <name>(6S)-5,6,7,8-tetrahydrofolate</name>
        <dbReference type="ChEBI" id="CHEBI:57453"/>
    </ligand>
</feature>
<evidence type="ECO:0000255" key="1">
    <source>
        <dbReference type="HAMAP-Rule" id="MF_00182"/>
    </source>
</evidence>
<gene>
    <name evidence="1" type="primary">fmt</name>
    <name type="ordered locus">LGAS_0761</name>
</gene>
<protein>
    <recommendedName>
        <fullName evidence="1">Methionyl-tRNA formyltransferase</fullName>
        <ecNumber evidence="1">2.1.2.9</ecNumber>
    </recommendedName>
</protein>
<dbReference type="EC" id="2.1.2.9" evidence="1"/>
<dbReference type="EMBL" id="CP000413">
    <property type="protein sequence ID" value="ABJ60152.1"/>
    <property type="molecule type" value="Genomic_DNA"/>
</dbReference>
<dbReference type="RefSeq" id="WP_003653401.1">
    <property type="nucleotide sequence ID" value="NZ_WBMG01000005.1"/>
</dbReference>
<dbReference type="SMR" id="Q044H0"/>
<dbReference type="GeneID" id="29638902"/>
<dbReference type="KEGG" id="lga:LGAS_0761"/>
<dbReference type="HOGENOM" id="CLU_033347_1_1_9"/>
<dbReference type="BioCyc" id="LGAS324831:G1G6Y-755-MONOMER"/>
<dbReference type="Proteomes" id="UP000000664">
    <property type="component" value="Chromosome"/>
</dbReference>
<dbReference type="GO" id="GO:0005829">
    <property type="term" value="C:cytosol"/>
    <property type="evidence" value="ECO:0007669"/>
    <property type="project" value="TreeGrafter"/>
</dbReference>
<dbReference type="GO" id="GO:0004479">
    <property type="term" value="F:methionyl-tRNA formyltransferase activity"/>
    <property type="evidence" value="ECO:0007669"/>
    <property type="project" value="UniProtKB-UniRule"/>
</dbReference>
<dbReference type="CDD" id="cd08646">
    <property type="entry name" value="FMT_core_Met-tRNA-FMT_N"/>
    <property type="match status" value="1"/>
</dbReference>
<dbReference type="CDD" id="cd08704">
    <property type="entry name" value="Met_tRNA_FMT_C"/>
    <property type="match status" value="1"/>
</dbReference>
<dbReference type="FunFam" id="3.40.50.170:FF:000004">
    <property type="entry name" value="Methionyl-tRNA formyltransferase"/>
    <property type="match status" value="1"/>
</dbReference>
<dbReference type="Gene3D" id="3.40.50.12230">
    <property type="match status" value="1"/>
</dbReference>
<dbReference type="HAMAP" id="MF_00182">
    <property type="entry name" value="Formyl_trans"/>
    <property type="match status" value="1"/>
</dbReference>
<dbReference type="InterPro" id="IPR005794">
    <property type="entry name" value="Fmt"/>
</dbReference>
<dbReference type="InterPro" id="IPR005793">
    <property type="entry name" value="Formyl_trans_C"/>
</dbReference>
<dbReference type="InterPro" id="IPR002376">
    <property type="entry name" value="Formyl_transf_N"/>
</dbReference>
<dbReference type="InterPro" id="IPR036477">
    <property type="entry name" value="Formyl_transf_N_sf"/>
</dbReference>
<dbReference type="InterPro" id="IPR011034">
    <property type="entry name" value="Formyl_transferase-like_C_sf"/>
</dbReference>
<dbReference type="InterPro" id="IPR044135">
    <property type="entry name" value="Met-tRNA-FMT_C"/>
</dbReference>
<dbReference type="InterPro" id="IPR041711">
    <property type="entry name" value="Met-tRNA-FMT_N"/>
</dbReference>
<dbReference type="NCBIfam" id="TIGR00460">
    <property type="entry name" value="fmt"/>
    <property type="match status" value="1"/>
</dbReference>
<dbReference type="PANTHER" id="PTHR11138">
    <property type="entry name" value="METHIONYL-TRNA FORMYLTRANSFERASE"/>
    <property type="match status" value="1"/>
</dbReference>
<dbReference type="PANTHER" id="PTHR11138:SF5">
    <property type="entry name" value="METHIONYL-TRNA FORMYLTRANSFERASE, MITOCHONDRIAL"/>
    <property type="match status" value="1"/>
</dbReference>
<dbReference type="Pfam" id="PF02911">
    <property type="entry name" value="Formyl_trans_C"/>
    <property type="match status" value="1"/>
</dbReference>
<dbReference type="Pfam" id="PF00551">
    <property type="entry name" value="Formyl_trans_N"/>
    <property type="match status" value="1"/>
</dbReference>
<dbReference type="SUPFAM" id="SSF50486">
    <property type="entry name" value="FMT C-terminal domain-like"/>
    <property type="match status" value="1"/>
</dbReference>
<dbReference type="SUPFAM" id="SSF53328">
    <property type="entry name" value="Formyltransferase"/>
    <property type="match status" value="1"/>
</dbReference>
<keyword id="KW-0648">Protein biosynthesis</keyword>
<keyword id="KW-0808">Transferase</keyword>
<organism>
    <name type="scientific">Lactobacillus gasseri (strain ATCC 33323 / DSM 20243 / BCRC 14619 / CIP 102991 / JCM 1131 / KCTC 3163 / NCIMB 11718 / NCTC 13722 / AM63)</name>
    <dbReference type="NCBI Taxonomy" id="324831"/>
    <lineage>
        <taxon>Bacteria</taxon>
        <taxon>Bacillati</taxon>
        <taxon>Bacillota</taxon>
        <taxon>Bacilli</taxon>
        <taxon>Lactobacillales</taxon>
        <taxon>Lactobacillaceae</taxon>
        <taxon>Lactobacillus</taxon>
    </lineage>
</organism>
<accession>Q044H0</accession>
<sequence length="314" mass="34423">MSSVIFLGTPNFGSVVLQGLIDQGYDVKAVVTQPDKRVGRKQVVHQSAVKQTALKHNLPVYQPAKLSGSDELAELMKIEPDFIVTAAYGQFLPTKFLKSAKIAPVNVHGSLLPKYRGGAPIQYSVLNGDKETGVTIMEMVKKMDAGDIFSQKALPIEDDDTSGTLFDKLSILGRDLLLETLPKFIDGTVTRTPQNEDKVVFSPNISKEQEQIKLTMTAEQANNLIRALNPDPGAYVMLDGKRFKIWKAKPLAEKTSFPAGTLVTNKKKFVISMAGGSELELLEVQPTGKKKMNIKDYLNGQGSHFTSGEKIIDE</sequence>
<comment type="function">
    <text evidence="1">Attaches a formyl group to the free amino group of methionyl-tRNA(fMet). The formyl group appears to play a dual role in the initiator identity of N-formylmethionyl-tRNA by promoting its recognition by IF2 and preventing the misappropriation of this tRNA by the elongation apparatus.</text>
</comment>
<comment type="catalytic activity">
    <reaction evidence="1">
        <text>L-methionyl-tRNA(fMet) + (6R)-10-formyltetrahydrofolate = N-formyl-L-methionyl-tRNA(fMet) + (6S)-5,6,7,8-tetrahydrofolate + H(+)</text>
        <dbReference type="Rhea" id="RHEA:24380"/>
        <dbReference type="Rhea" id="RHEA-COMP:9952"/>
        <dbReference type="Rhea" id="RHEA-COMP:9953"/>
        <dbReference type="ChEBI" id="CHEBI:15378"/>
        <dbReference type="ChEBI" id="CHEBI:57453"/>
        <dbReference type="ChEBI" id="CHEBI:78530"/>
        <dbReference type="ChEBI" id="CHEBI:78844"/>
        <dbReference type="ChEBI" id="CHEBI:195366"/>
        <dbReference type="EC" id="2.1.2.9"/>
    </reaction>
</comment>
<comment type="similarity">
    <text evidence="1">Belongs to the Fmt family.</text>
</comment>
<proteinExistence type="inferred from homology"/>
<name>FMT_LACGA</name>